<name>MFD_STAHJ</name>
<accession>Q4L3G0</accession>
<protein>
    <recommendedName>
        <fullName evidence="1">Transcription-repair-coupling factor</fullName>
        <shortName evidence="1">TRCF</shortName>
        <ecNumber evidence="1">3.6.4.-</ecNumber>
    </recommendedName>
</protein>
<gene>
    <name evidence="1" type="primary">mfd</name>
    <name type="ordered locus">SH2508</name>
</gene>
<comment type="function">
    <text evidence="1">Couples transcription and DNA repair by recognizing RNA polymerase (RNAP) stalled at DNA lesions. Mediates ATP-dependent release of RNAP and its truncated transcript from the DNA, and recruitment of nucleotide excision repair machinery to the damaged site.</text>
</comment>
<comment type="subcellular location">
    <subcellularLocation>
        <location evidence="1">Cytoplasm</location>
    </subcellularLocation>
</comment>
<comment type="similarity">
    <text evidence="1">In the N-terminal section; belongs to the UvrB family.</text>
</comment>
<comment type="similarity">
    <text evidence="1">In the C-terminal section; belongs to the helicase family. RecG subfamily.</text>
</comment>
<dbReference type="EC" id="3.6.4.-" evidence="1"/>
<dbReference type="EMBL" id="AP006716">
    <property type="protein sequence ID" value="BAE05817.1"/>
    <property type="molecule type" value="Genomic_DNA"/>
</dbReference>
<dbReference type="RefSeq" id="WP_011276758.1">
    <property type="nucleotide sequence ID" value="NC_007168.1"/>
</dbReference>
<dbReference type="SMR" id="Q4L3G0"/>
<dbReference type="KEGG" id="sha:SH2508"/>
<dbReference type="eggNOG" id="COG1197">
    <property type="taxonomic scope" value="Bacteria"/>
</dbReference>
<dbReference type="HOGENOM" id="CLU_005122_1_3_9"/>
<dbReference type="OrthoDB" id="9804325at2"/>
<dbReference type="Proteomes" id="UP000000543">
    <property type="component" value="Chromosome"/>
</dbReference>
<dbReference type="GO" id="GO:0005737">
    <property type="term" value="C:cytoplasm"/>
    <property type="evidence" value="ECO:0007669"/>
    <property type="project" value="UniProtKB-SubCell"/>
</dbReference>
<dbReference type="GO" id="GO:0005524">
    <property type="term" value="F:ATP binding"/>
    <property type="evidence" value="ECO:0007669"/>
    <property type="project" value="UniProtKB-UniRule"/>
</dbReference>
<dbReference type="GO" id="GO:0003684">
    <property type="term" value="F:damaged DNA binding"/>
    <property type="evidence" value="ECO:0007669"/>
    <property type="project" value="InterPro"/>
</dbReference>
<dbReference type="GO" id="GO:0003678">
    <property type="term" value="F:DNA helicase activity"/>
    <property type="evidence" value="ECO:0007669"/>
    <property type="project" value="TreeGrafter"/>
</dbReference>
<dbReference type="GO" id="GO:0016787">
    <property type="term" value="F:hydrolase activity"/>
    <property type="evidence" value="ECO:0007669"/>
    <property type="project" value="UniProtKB-KW"/>
</dbReference>
<dbReference type="GO" id="GO:0006355">
    <property type="term" value="P:regulation of DNA-templated transcription"/>
    <property type="evidence" value="ECO:0007669"/>
    <property type="project" value="UniProtKB-UniRule"/>
</dbReference>
<dbReference type="GO" id="GO:0000716">
    <property type="term" value="P:transcription-coupled nucleotide-excision repair, DNA damage recognition"/>
    <property type="evidence" value="ECO:0007669"/>
    <property type="project" value="UniProtKB-UniRule"/>
</dbReference>
<dbReference type="CDD" id="cd17991">
    <property type="entry name" value="DEXHc_TRCF"/>
    <property type="match status" value="1"/>
</dbReference>
<dbReference type="FunFam" id="3.40.50.300:FF:000546">
    <property type="entry name" value="Transcription-repair-coupling factor"/>
    <property type="match status" value="1"/>
</dbReference>
<dbReference type="Gene3D" id="2.40.10.170">
    <property type="match status" value="1"/>
</dbReference>
<dbReference type="Gene3D" id="3.40.50.11140">
    <property type="match status" value="1"/>
</dbReference>
<dbReference type="Gene3D" id="3.40.50.11180">
    <property type="match status" value="1"/>
</dbReference>
<dbReference type="Gene3D" id="3.40.50.300">
    <property type="entry name" value="P-loop containing nucleotide triphosphate hydrolases"/>
    <property type="match status" value="2"/>
</dbReference>
<dbReference type="Gene3D" id="3.30.2060.10">
    <property type="entry name" value="Penicillin-binding protein 1b domain"/>
    <property type="match status" value="1"/>
</dbReference>
<dbReference type="Gene3D" id="3.90.1150.50">
    <property type="entry name" value="Transcription-repair-coupling factor, D7 domain"/>
    <property type="match status" value="1"/>
</dbReference>
<dbReference type="HAMAP" id="MF_00969">
    <property type="entry name" value="TRCF"/>
    <property type="match status" value="1"/>
</dbReference>
<dbReference type="InterPro" id="IPR003711">
    <property type="entry name" value="CarD-like/TRCF_RID"/>
</dbReference>
<dbReference type="InterPro" id="IPR036101">
    <property type="entry name" value="CarD-like/TRCF_RID_sf"/>
</dbReference>
<dbReference type="InterPro" id="IPR011545">
    <property type="entry name" value="DEAD/DEAH_box_helicase_dom"/>
</dbReference>
<dbReference type="InterPro" id="IPR014001">
    <property type="entry name" value="Helicase_ATP-bd"/>
</dbReference>
<dbReference type="InterPro" id="IPR001650">
    <property type="entry name" value="Helicase_C-like"/>
</dbReference>
<dbReference type="InterPro" id="IPR004576">
    <property type="entry name" value="Mfd"/>
</dbReference>
<dbReference type="InterPro" id="IPR048635">
    <property type="entry name" value="MFD_D3"/>
</dbReference>
<dbReference type="InterPro" id="IPR027417">
    <property type="entry name" value="P-loop_NTPase"/>
</dbReference>
<dbReference type="InterPro" id="IPR047112">
    <property type="entry name" value="RecG/Mfd"/>
</dbReference>
<dbReference type="InterPro" id="IPR037235">
    <property type="entry name" value="TRCF-like_C_D7"/>
</dbReference>
<dbReference type="InterPro" id="IPR005118">
    <property type="entry name" value="TRCF_C"/>
</dbReference>
<dbReference type="InterPro" id="IPR041471">
    <property type="entry name" value="UvrB_inter"/>
</dbReference>
<dbReference type="NCBIfam" id="TIGR00580">
    <property type="entry name" value="mfd"/>
    <property type="match status" value="1"/>
</dbReference>
<dbReference type="PANTHER" id="PTHR47964">
    <property type="entry name" value="ATP-DEPENDENT DNA HELICASE HOMOLOG RECG, CHLOROPLASTIC"/>
    <property type="match status" value="1"/>
</dbReference>
<dbReference type="PANTHER" id="PTHR47964:SF1">
    <property type="entry name" value="ATP-DEPENDENT DNA HELICASE HOMOLOG RECG, CHLOROPLASTIC"/>
    <property type="match status" value="1"/>
</dbReference>
<dbReference type="Pfam" id="PF02559">
    <property type="entry name" value="CarD_TRCF_RID"/>
    <property type="match status" value="1"/>
</dbReference>
<dbReference type="Pfam" id="PF00270">
    <property type="entry name" value="DEAD"/>
    <property type="match status" value="1"/>
</dbReference>
<dbReference type="Pfam" id="PF00271">
    <property type="entry name" value="Helicase_C"/>
    <property type="match status" value="1"/>
</dbReference>
<dbReference type="Pfam" id="PF21132">
    <property type="entry name" value="MFD_D3"/>
    <property type="match status" value="1"/>
</dbReference>
<dbReference type="Pfam" id="PF03461">
    <property type="entry name" value="TRCF"/>
    <property type="match status" value="1"/>
</dbReference>
<dbReference type="Pfam" id="PF17757">
    <property type="entry name" value="UvrB_inter"/>
    <property type="match status" value="1"/>
</dbReference>
<dbReference type="SMART" id="SM01058">
    <property type="entry name" value="CarD_TRCF"/>
    <property type="match status" value="1"/>
</dbReference>
<dbReference type="SMART" id="SM00487">
    <property type="entry name" value="DEXDc"/>
    <property type="match status" value="1"/>
</dbReference>
<dbReference type="SMART" id="SM00490">
    <property type="entry name" value="HELICc"/>
    <property type="match status" value="1"/>
</dbReference>
<dbReference type="SMART" id="SM00982">
    <property type="entry name" value="TRCF"/>
    <property type="match status" value="1"/>
</dbReference>
<dbReference type="SUPFAM" id="SSF141259">
    <property type="entry name" value="CarD-like"/>
    <property type="match status" value="1"/>
</dbReference>
<dbReference type="SUPFAM" id="SSF52540">
    <property type="entry name" value="P-loop containing nucleoside triphosphate hydrolases"/>
    <property type="match status" value="4"/>
</dbReference>
<dbReference type="SUPFAM" id="SSF143517">
    <property type="entry name" value="TRCF domain-like"/>
    <property type="match status" value="1"/>
</dbReference>
<dbReference type="PROSITE" id="PS51192">
    <property type="entry name" value="HELICASE_ATP_BIND_1"/>
    <property type="match status" value="1"/>
</dbReference>
<dbReference type="PROSITE" id="PS51194">
    <property type="entry name" value="HELICASE_CTER"/>
    <property type="match status" value="1"/>
</dbReference>
<sequence length="1169" mass="134926">MRPIISDYIQNDKRFQELDDVFGHQNILVTGLSPSAKATIIAEKYLKDQKQMLLITNNLYQADKLETDILQYIDHSEVYKYPVQDIMTEEFSTQSPQLMSERVRTLTALAHNKKGLFIVPLNGLKKWLTPFELWKDHQITLRVGEDIDVDEFLNKLVNMGYRRESVVSHIGEFSLRGGIIDIYPLIGQPVRIELFDTEVDSIRDFDVETQRSNDNIEEVSITTASDYVITDDVIQHLQSELKTAYEATRPKIDKSVRNDLKETYESFKLFETTFFDHQLLRRLVAFMYEQPSTLIDYFAKDAIIVADEYNRIKETEKTLTTEVDDFIQNLIESGNGFIGQSFMQYDGFESLLKDYPVTYFTLFTSTMPVQLQHIIKFSCKPVQQFYGQYDIMRSEFQRYVHNDYHIVVLVETETKVERIQSMLNEMHIPTVTNVQNDIKSGQVVVTEGSLSEGFELPYMQLVVITERELFKTKQKKQRKRTKTLSNAEKIKSYQDLNVGDYVVHVHHGVGRYLGVETLEVGDVHRDYIKLQYKGTDQLFVPVDQMDQVQKYVASEDKSPKLNKLGGSEWKKTKAKVQQSVEDIADELIALYKEREMSVGYQYGEDTAEQSAFEMDFPYELTPDQAKSIDEIKGDMERERPMDRLLCGDVGYGKTEVAVRAAFKAVMEGKQVAFLVPTTILAQQHYETLIERMQDFPVQIELISRFRSTKEVKETKEGLKSGYVDIVVGTHKLLGKDIHYKDLGLLIVDEEQRFGVRHKERIKTMKTNVDVLTLTATPIPRTLHMSMLGVRDLSVIETPPENRFPVQTYVLEQNSNFIKEALERELSRDGQVFYLYNRVQSIYEKREQLQMLMPDANIAVAHGQMTERDLEETMLSFINGEFDILVTTTIIETGVDVPNANTLIIEEADRFGLSQLYQLRGRVGRSSRIGYAYFLHSANKVLTETAEERLQAIKEFTELGSGFKIAMRDLNIRGAGNLLGKQQHGFIDSVGFDLYSQMLEEAVNEKRGIKEEEPDAPEVEMELNLDAYLPAEYIQNEQAKIEIYKKLRKVETEEQLFDIKDELIDRFNDYPVEVERLLEMVEIKIHALHAGVTLIKDKGKQIEVSLSTKATEQMNGEELFKQTQPLGRAMKLGVKENRMHVTLTKSKQWLDNLKFLVRCLEGSMVIEDEN</sequence>
<keyword id="KW-0067">ATP-binding</keyword>
<keyword id="KW-0963">Cytoplasm</keyword>
<keyword id="KW-0227">DNA damage</keyword>
<keyword id="KW-0234">DNA repair</keyword>
<keyword id="KW-0238">DNA-binding</keyword>
<keyword id="KW-0347">Helicase</keyword>
<keyword id="KW-0378">Hydrolase</keyword>
<keyword id="KW-0547">Nucleotide-binding</keyword>
<evidence type="ECO:0000255" key="1">
    <source>
        <dbReference type="HAMAP-Rule" id="MF_00969"/>
    </source>
</evidence>
<feature type="chain" id="PRO_0000282678" description="Transcription-repair-coupling factor">
    <location>
        <begin position="1"/>
        <end position="1169"/>
    </location>
</feature>
<feature type="domain" description="Helicase ATP-binding" evidence="1">
    <location>
        <begin position="634"/>
        <end position="795"/>
    </location>
</feature>
<feature type="domain" description="Helicase C-terminal" evidence="1">
    <location>
        <begin position="809"/>
        <end position="970"/>
    </location>
</feature>
<feature type="short sequence motif" description="DEEQ box">
    <location>
        <begin position="748"/>
        <end position="751"/>
    </location>
</feature>
<feature type="binding site" evidence="1">
    <location>
        <begin position="647"/>
        <end position="654"/>
    </location>
    <ligand>
        <name>ATP</name>
        <dbReference type="ChEBI" id="CHEBI:30616"/>
    </ligand>
</feature>
<reference key="1">
    <citation type="journal article" date="2005" name="J. Bacteriol.">
        <title>Whole-genome sequencing of Staphylococcus haemolyticus uncovers the extreme plasticity of its genome and the evolution of human-colonizing staphylococcal species.</title>
        <authorList>
            <person name="Takeuchi F."/>
            <person name="Watanabe S."/>
            <person name="Baba T."/>
            <person name="Yuzawa H."/>
            <person name="Ito T."/>
            <person name="Morimoto Y."/>
            <person name="Kuroda M."/>
            <person name="Cui L."/>
            <person name="Takahashi M."/>
            <person name="Ankai A."/>
            <person name="Baba S."/>
            <person name="Fukui S."/>
            <person name="Lee J.C."/>
            <person name="Hiramatsu K."/>
        </authorList>
    </citation>
    <scope>NUCLEOTIDE SEQUENCE [LARGE SCALE GENOMIC DNA]</scope>
    <source>
        <strain>JCSC1435</strain>
    </source>
</reference>
<proteinExistence type="inferred from homology"/>
<organism>
    <name type="scientific">Staphylococcus haemolyticus (strain JCSC1435)</name>
    <dbReference type="NCBI Taxonomy" id="279808"/>
    <lineage>
        <taxon>Bacteria</taxon>
        <taxon>Bacillati</taxon>
        <taxon>Bacillota</taxon>
        <taxon>Bacilli</taxon>
        <taxon>Bacillales</taxon>
        <taxon>Staphylococcaceae</taxon>
        <taxon>Staphylococcus</taxon>
    </lineage>
</organism>